<proteinExistence type="inferred from homology"/>
<keyword id="KW-0067">ATP-binding</keyword>
<keyword id="KW-1003">Cell membrane</keyword>
<keyword id="KW-0418">Kinase</keyword>
<keyword id="KW-0472">Membrane</keyword>
<keyword id="KW-0547">Nucleotide-binding</keyword>
<keyword id="KW-0597">Phosphoprotein</keyword>
<keyword id="KW-1185">Reference proteome</keyword>
<keyword id="KW-0808">Transferase</keyword>
<keyword id="KW-0812">Transmembrane</keyword>
<keyword id="KW-1133">Transmembrane helix</keyword>
<keyword id="KW-0902">Two-component regulatory system</keyword>
<gene>
    <name evidence="7" type="primary">hk06</name>
    <name evidence="9" type="ordered locus">SPD_2019</name>
</gene>
<dbReference type="EC" id="2.7.13.3" evidence="1"/>
<dbReference type="EMBL" id="CP000410">
    <property type="protein sequence ID" value="ABJ54017.1"/>
    <property type="molecule type" value="Genomic_DNA"/>
</dbReference>
<dbReference type="RefSeq" id="WP_000594665.1">
    <property type="nucleotide sequence ID" value="NZ_JAMLJR010000007.1"/>
</dbReference>
<dbReference type="SMR" id="A0A0H2ZM62"/>
<dbReference type="PaxDb" id="373153-SPD_2019"/>
<dbReference type="KEGG" id="spd:SPD_2019"/>
<dbReference type="eggNOG" id="COG0642">
    <property type="taxonomic scope" value="Bacteria"/>
</dbReference>
<dbReference type="eggNOG" id="COG3850">
    <property type="taxonomic scope" value="Bacteria"/>
</dbReference>
<dbReference type="HOGENOM" id="CLU_000445_89_6_9"/>
<dbReference type="BioCyc" id="SPNE373153:G1G6V-2166-MONOMER"/>
<dbReference type="Proteomes" id="UP000001452">
    <property type="component" value="Chromosome"/>
</dbReference>
<dbReference type="GO" id="GO:0005886">
    <property type="term" value="C:plasma membrane"/>
    <property type="evidence" value="ECO:0007669"/>
    <property type="project" value="UniProtKB-SubCell"/>
</dbReference>
<dbReference type="GO" id="GO:0005524">
    <property type="term" value="F:ATP binding"/>
    <property type="evidence" value="ECO:0007669"/>
    <property type="project" value="UniProtKB-KW"/>
</dbReference>
<dbReference type="GO" id="GO:0000155">
    <property type="term" value="F:phosphorelay sensor kinase activity"/>
    <property type="evidence" value="ECO:0007669"/>
    <property type="project" value="InterPro"/>
</dbReference>
<dbReference type="CDD" id="cd06225">
    <property type="entry name" value="HAMP"/>
    <property type="match status" value="1"/>
</dbReference>
<dbReference type="CDD" id="cd00075">
    <property type="entry name" value="HATPase"/>
    <property type="match status" value="1"/>
</dbReference>
<dbReference type="CDD" id="cd00082">
    <property type="entry name" value="HisKA"/>
    <property type="match status" value="1"/>
</dbReference>
<dbReference type="FunFam" id="3.30.565.10:FF:000124">
    <property type="entry name" value="Histidine kinase"/>
    <property type="match status" value="1"/>
</dbReference>
<dbReference type="Gene3D" id="1.10.287.130">
    <property type="match status" value="1"/>
</dbReference>
<dbReference type="Gene3D" id="6.10.340.10">
    <property type="match status" value="1"/>
</dbReference>
<dbReference type="Gene3D" id="3.30.565.10">
    <property type="entry name" value="Histidine kinase-like ATPase, C-terminal domain"/>
    <property type="match status" value="1"/>
</dbReference>
<dbReference type="InterPro" id="IPR050398">
    <property type="entry name" value="Bact_Sensor_His_Kinase"/>
</dbReference>
<dbReference type="InterPro" id="IPR003660">
    <property type="entry name" value="HAMP_dom"/>
</dbReference>
<dbReference type="InterPro" id="IPR036890">
    <property type="entry name" value="HATPase_C_sf"/>
</dbReference>
<dbReference type="InterPro" id="IPR005467">
    <property type="entry name" value="His_kinase_dom"/>
</dbReference>
<dbReference type="InterPro" id="IPR003661">
    <property type="entry name" value="HisK_dim/P_dom"/>
</dbReference>
<dbReference type="InterPro" id="IPR036097">
    <property type="entry name" value="HisK_dim/P_sf"/>
</dbReference>
<dbReference type="PANTHER" id="PTHR45528">
    <property type="entry name" value="SENSOR HISTIDINE KINASE CPXA"/>
    <property type="match status" value="1"/>
</dbReference>
<dbReference type="PANTHER" id="PTHR45528:SF1">
    <property type="entry name" value="SENSOR HISTIDINE KINASE CPXA"/>
    <property type="match status" value="1"/>
</dbReference>
<dbReference type="Pfam" id="PF00672">
    <property type="entry name" value="HAMP"/>
    <property type="match status" value="1"/>
</dbReference>
<dbReference type="Pfam" id="PF02518">
    <property type="entry name" value="HATPase_c"/>
    <property type="match status" value="1"/>
</dbReference>
<dbReference type="Pfam" id="PF00512">
    <property type="entry name" value="HisKA"/>
    <property type="match status" value="1"/>
</dbReference>
<dbReference type="SMART" id="SM00304">
    <property type="entry name" value="HAMP"/>
    <property type="match status" value="1"/>
</dbReference>
<dbReference type="SMART" id="SM00387">
    <property type="entry name" value="HATPase_c"/>
    <property type="match status" value="1"/>
</dbReference>
<dbReference type="SMART" id="SM00388">
    <property type="entry name" value="HisKA"/>
    <property type="match status" value="1"/>
</dbReference>
<dbReference type="SUPFAM" id="SSF55874">
    <property type="entry name" value="ATPase domain of HSP90 chaperone/DNA topoisomerase II/histidine kinase"/>
    <property type="match status" value="1"/>
</dbReference>
<dbReference type="SUPFAM" id="SSF158472">
    <property type="entry name" value="HAMP domain-like"/>
    <property type="match status" value="1"/>
</dbReference>
<dbReference type="SUPFAM" id="SSF47384">
    <property type="entry name" value="Homodimeric domain of signal transducing histidine kinase"/>
    <property type="match status" value="1"/>
</dbReference>
<dbReference type="PROSITE" id="PS50885">
    <property type="entry name" value="HAMP"/>
    <property type="match status" value="1"/>
</dbReference>
<dbReference type="PROSITE" id="PS50109">
    <property type="entry name" value="HIS_KIN"/>
    <property type="match status" value="1"/>
</dbReference>
<reference evidence="10" key="1">
    <citation type="journal article" date="2007" name="J. Bacteriol.">
        <title>Genome sequence of Avery's virulent serotype 2 strain D39 of Streptococcus pneumoniae and comparison with that of unencapsulated laboratory strain R6.</title>
        <authorList>
            <person name="Lanie J.A."/>
            <person name="Ng W.-L."/>
            <person name="Kazmierczak K.M."/>
            <person name="Andrzejewski T.M."/>
            <person name="Davidsen T.M."/>
            <person name="Wayne K.J."/>
            <person name="Tettelin H."/>
            <person name="Glass J.I."/>
            <person name="Winkler M.E."/>
        </authorList>
    </citation>
    <scope>NUCLEOTIDE SEQUENCE [LARGE SCALE GENOMIC DNA]</scope>
    <source>
        <strain evidence="10">D39 / NCTC 7466</strain>
    </source>
</reference>
<reference evidence="8" key="2">
    <citation type="journal article" date="2005" name="Proc. Natl. Acad. Sci. U.S.A.">
        <title>The two-component signal transduction system RR06/HK06 regulates expression of cbpA in Streptococcus pneumoniae.</title>
        <authorList>
            <person name="Standish A.J."/>
            <person name="Stroeher U.H."/>
            <person name="Paton J.C."/>
        </authorList>
    </citation>
    <scope>FUNCTION</scope>
    <scope>DISRUPTION PHENOTYPE</scope>
</reference>
<reference evidence="8" key="3">
    <citation type="journal article" date="2007" name="J. Bacteriol.">
        <title>RR06 activates transcription of spr1996 and cbpA in Streptococcus pneumoniae.</title>
        <authorList>
            <person name="Ma Z."/>
            <person name="Zhang J.R."/>
        </authorList>
    </citation>
    <scope>FUNCTION</scope>
    <scope>DISRUPTION PHENOTYPE</scope>
</reference>
<comment type="function">
    <text evidence="5 6">Member of the two-component regulatory system HK06/RR06 involved in regulation of target genes, including choline-binding protein CbpA (PubMed:15897461). Has been shown in one study to not be required for regulation of expression of choline-binding protein CbpA (PubMed:17220227).</text>
</comment>
<comment type="catalytic activity">
    <reaction evidence="1">
        <text>ATP + protein L-histidine = ADP + protein N-phospho-L-histidine.</text>
        <dbReference type="EC" id="2.7.13.3"/>
    </reaction>
</comment>
<comment type="subcellular location">
    <subcellularLocation>
        <location evidence="8">Cell membrane</location>
        <topology evidence="2">Multi-pass membrane protein</topology>
    </subcellularLocation>
</comment>
<comment type="disruption phenotype">
    <text evidence="5 6">Expression of CbpA up-regulated at transcript and protein levels (PubMed:15897461). However, another study shows that expression of CbpA is unaffected at protein level (PubMed:17220227). Does not significantly alter nasopharyngeal colonization in mouse CD-1 strain intranasal infection model (PubMed:15897461). However, significantly reduces numbers of bacteria found in the lung and blood at 96 h post-infection (PubMed:15897461).</text>
</comment>
<comment type="miscellaneous">
    <text evidence="6">Probably part of an rr06-hk06 operon.</text>
</comment>
<comment type="caution">
    <text evidence="5 6">Has been shown in one study to be required for regulation of expression of choline-binding protein CbpA (PubMed:15897461). However, has been shown in another study to not be required for regulation of expression of choline-binding protein CbpA (PubMed:17220227).</text>
</comment>
<feature type="chain" id="PRO_0000459070" description="Sensor histidine protein kinase HK06">
    <location>
        <begin position="1"/>
        <end position="443"/>
    </location>
</feature>
<feature type="transmembrane region" description="Helical" evidence="2">
    <location>
        <begin position="16"/>
        <end position="36"/>
    </location>
</feature>
<feature type="transmembrane region" description="Helical" evidence="2">
    <location>
        <begin position="140"/>
        <end position="160"/>
    </location>
</feature>
<feature type="domain" description="HAMP" evidence="3">
    <location>
        <begin position="165"/>
        <end position="217"/>
    </location>
</feature>
<feature type="domain" description="Histidine kinase" evidence="4">
    <location>
        <begin position="239"/>
        <end position="443"/>
    </location>
</feature>
<feature type="modified residue" description="Phosphohistidine; by autocatalysis" evidence="4">
    <location>
        <position position="242"/>
    </location>
</feature>
<name>HK06_STRP2</name>
<organism evidence="10">
    <name type="scientific">Streptococcus pneumoniae serotype 2 (strain D39 / NCTC 7466)</name>
    <dbReference type="NCBI Taxonomy" id="373153"/>
    <lineage>
        <taxon>Bacteria</taxon>
        <taxon>Bacillati</taxon>
        <taxon>Bacillota</taxon>
        <taxon>Bacilli</taxon>
        <taxon>Lactobacillales</taxon>
        <taxon>Streptococcaceae</taxon>
        <taxon>Streptococcus</taxon>
    </lineage>
</organism>
<accession>A0A0H2ZM62</accession>
<protein>
    <recommendedName>
        <fullName evidence="8">Sensor histidine protein kinase HK06</fullName>
        <ecNumber evidence="1">2.7.13.3</ecNumber>
    </recommendedName>
</protein>
<sequence>MIKNPKLLTKSFLRSFAILGGVGLVIHIAIYLTFPFYYIQLEGEKFNESARVFTEYLKTKTSDEIPSLLQSYSKSLTISAHLKRDIVDKRLPLVHDLDIKDGKLSNYIVMLDMSVSTADGKQVTVQFVHGVDVYKEAKNILLLYLPYTFLVTIAFSFVFSYFYTKRLLNPLFYISEVTSKMQDLDDNIRFDESRKDEVGEVGKQINGMYEHLLKVIHELESRNEQIVKLQNQKVSFVRGASHELKTPLASLRIILENMQHNIGDYKDHPKYIAKSINKIDQMSHLLEEVLESSKFQEWTECRETLTVKPVLVDILSRYQELAHSIGVTIENQLTDATRVVMSLRALDKVLTNLISNAIKYSDKNGRVIISEQDGYLSIKNTCAPLSDQELEHLFDIFYHSQIVTDKDESSGLGLYIVNNILESYQMDYSFLPYEHGMEFKISL</sequence>
<evidence type="ECO:0000250" key="1">
    <source>
        <dbReference type="UniProtKB" id="O34206"/>
    </source>
</evidence>
<evidence type="ECO:0000255" key="2"/>
<evidence type="ECO:0000255" key="3">
    <source>
        <dbReference type="PROSITE-ProRule" id="PRU00102"/>
    </source>
</evidence>
<evidence type="ECO:0000255" key="4">
    <source>
        <dbReference type="PROSITE-ProRule" id="PRU00107"/>
    </source>
</evidence>
<evidence type="ECO:0000269" key="5">
    <source>
    </source>
</evidence>
<evidence type="ECO:0000269" key="6">
    <source>
    </source>
</evidence>
<evidence type="ECO:0000303" key="7">
    <source>
    </source>
</evidence>
<evidence type="ECO:0000305" key="8"/>
<evidence type="ECO:0000312" key="9">
    <source>
        <dbReference type="EMBL" id="ABJ54017.1"/>
    </source>
</evidence>
<evidence type="ECO:0000312" key="10">
    <source>
        <dbReference type="Proteomes" id="UP000001452"/>
    </source>
</evidence>